<name>KAD_LEPCP</name>
<accession>B1Y6I7</accession>
<organism>
    <name type="scientific">Leptothrix cholodnii (strain ATCC 51168 / LMG 8142 / SP-6)</name>
    <name type="common">Leptothrix discophora (strain SP-6)</name>
    <dbReference type="NCBI Taxonomy" id="395495"/>
    <lineage>
        <taxon>Bacteria</taxon>
        <taxon>Pseudomonadati</taxon>
        <taxon>Pseudomonadota</taxon>
        <taxon>Betaproteobacteria</taxon>
        <taxon>Burkholderiales</taxon>
        <taxon>Sphaerotilaceae</taxon>
        <taxon>Leptothrix</taxon>
    </lineage>
</organism>
<gene>
    <name evidence="1" type="primary">adk</name>
    <name type="ordered locus">Lcho_2558</name>
</gene>
<sequence>MRLILLGAPGAGKGTQAAFICRKYGIPQISTGDMLRAAVKAGTEMGLAAKKVMDAGGLVSDDIIIGLVKERILQDDCANGFLFDGFPRTIPQAEAMKAAGVKLDLVLEIDVPSEAIIERMSGRRSHPASGRTYHVKFNPPKVDGVDDVTGEPLVQRDDDKEETVRKRLEVYQAQTRPLVDYYSAWAATGDAAAPRYAKIEGLGTVEEITARALAALG</sequence>
<reference key="1">
    <citation type="submission" date="2008-03" db="EMBL/GenBank/DDBJ databases">
        <title>Complete sequence of Leptothrix cholodnii SP-6.</title>
        <authorList>
            <consortium name="US DOE Joint Genome Institute"/>
            <person name="Copeland A."/>
            <person name="Lucas S."/>
            <person name="Lapidus A."/>
            <person name="Glavina del Rio T."/>
            <person name="Dalin E."/>
            <person name="Tice H."/>
            <person name="Bruce D."/>
            <person name="Goodwin L."/>
            <person name="Pitluck S."/>
            <person name="Chertkov O."/>
            <person name="Brettin T."/>
            <person name="Detter J.C."/>
            <person name="Han C."/>
            <person name="Kuske C.R."/>
            <person name="Schmutz J."/>
            <person name="Larimer F."/>
            <person name="Land M."/>
            <person name="Hauser L."/>
            <person name="Kyrpides N."/>
            <person name="Lykidis A."/>
            <person name="Emerson D."/>
            <person name="Richardson P."/>
        </authorList>
    </citation>
    <scope>NUCLEOTIDE SEQUENCE [LARGE SCALE GENOMIC DNA]</scope>
    <source>
        <strain>ATCC 51168 / LMG 8142 / SP-6</strain>
    </source>
</reference>
<proteinExistence type="inferred from homology"/>
<keyword id="KW-0067">ATP-binding</keyword>
<keyword id="KW-0963">Cytoplasm</keyword>
<keyword id="KW-0418">Kinase</keyword>
<keyword id="KW-0545">Nucleotide biosynthesis</keyword>
<keyword id="KW-0547">Nucleotide-binding</keyword>
<keyword id="KW-1185">Reference proteome</keyword>
<keyword id="KW-0808">Transferase</keyword>
<feature type="chain" id="PRO_1000100579" description="Adenylate kinase">
    <location>
        <begin position="1"/>
        <end position="217"/>
    </location>
</feature>
<feature type="region of interest" description="NMP" evidence="1">
    <location>
        <begin position="30"/>
        <end position="59"/>
    </location>
</feature>
<feature type="region of interest" description="LID" evidence="1">
    <location>
        <begin position="122"/>
        <end position="159"/>
    </location>
</feature>
<feature type="binding site" evidence="1">
    <location>
        <begin position="10"/>
        <end position="15"/>
    </location>
    <ligand>
        <name>ATP</name>
        <dbReference type="ChEBI" id="CHEBI:30616"/>
    </ligand>
</feature>
<feature type="binding site" evidence="1">
    <location>
        <position position="31"/>
    </location>
    <ligand>
        <name>AMP</name>
        <dbReference type="ChEBI" id="CHEBI:456215"/>
    </ligand>
</feature>
<feature type="binding site" evidence="1">
    <location>
        <position position="36"/>
    </location>
    <ligand>
        <name>AMP</name>
        <dbReference type="ChEBI" id="CHEBI:456215"/>
    </ligand>
</feature>
<feature type="binding site" evidence="1">
    <location>
        <begin position="57"/>
        <end position="59"/>
    </location>
    <ligand>
        <name>AMP</name>
        <dbReference type="ChEBI" id="CHEBI:456215"/>
    </ligand>
</feature>
<feature type="binding site" evidence="1">
    <location>
        <begin position="85"/>
        <end position="88"/>
    </location>
    <ligand>
        <name>AMP</name>
        <dbReference type="ChEBI" id="CHEBI:456215"/>
    </ligand>
</feature>
<feature type="binding site" evidence="1">
    <location>
        <position position="92"/>
    </location>
    <ligand>
        <name>AMP</name>
        <dbReference type="ChEBI" id="CHEBI:456215"/>
    </ligand>
</feature>
<feature type="binding site" evidence="1">
    <location>
        <position position="123"/>
    </location>
    <ligand>
        <name>ATP</name>
        <dbReference type="ChEBI" id="CHEBI:30616"/>
    </ligand>
</feature>
<feature type="binding site" evidence="1">
    <location>
        <begin position="132"/>
        <end position="133"/>
    </location>
    <ligand>
        <name>ATP</name>
        <dbReference type="ChEBI" id="CHEBI:30616"/>
    </ligand>
</feature>
<feature type="binding site" evidence="1">
    <location>
        <position position="156"/>
    </location>
    <ligand>
        <name>AMP</name>
        <dbReference type="ChEBI" id="CHEBI:456215"/>
    </ligand>
</feature>
<feature type="binding site" evidence="1">
    <location>
        <position position="167"/>
    </location>
    <ligand>
        <name>AMP</name>
        <dbReference type="ChEBI" id="CHEBI:456215"/>
    </ligand>
</feature>
<feature type="binding site" evidence="1">
    <location>
        <position position="203"/>
    </location>
    <ligand>
        <name>ATP</name>
        <dbReference type="ChEBI" id="CHEBI:30616"/>
    </ligand>
</feature>
<comment type="function">
    <text evidence="1">Catalyzes the reversible transfer of the terminal phosphate group between ATP and AMP. Plays an important role in cellular energy homeostasis and in adenine nucleotide metabolism.</text>
</comment>
<comment type="catalytic activity">
    <reaction evidence="1">
        <text>AMP + ATP = 2 ADP</text>
        <dbReference type="Rhea" id="RHEA:12973"/>
        <dbReference type="ChEBI" id="CHEBI:30616"/>
        <dbReference type="ChEBI" id="CHEBI:456215"/>
        <dbReference type="ChEBI" id="CHEBI:456216"/>
        <dbReference type="EC" id="2.7.4.3"/>
    </reaction>
</comment>
<comment type="pathway">
    <text evidence="1">Purine metabolism; AMP biosynthesis via salvage pathway; AMP from ADP: step 1/1.</text>
</comment>
<comment type="subunit">
    <text evidence="1">Monomer.</text>
</comment>
<comment type="subcellular location">
    <subcellularLocation>
        <location evidence="1">Cytoplasm</location>
    </subcellularLocation>
</comment>
<comment type="domain">
    <text evidence="1">Consists of three domains, a large central CORE domain and two small peripheral domains, NMPbind and LID, which undergo movements during catalysis. The LID domain closes over the site of phosphoryl transfer upon ATP binding. Assembling and dissambling the active center during each catalytic cycle provides an effective means to prevent ATP hydrolysis.</text>
</comment>
<comment type="similarity">
    <text evidence="1">Belongs to the adenylate kinase family.</text>
</comment>
<evidence type="ECO:0000255" key="1">
    <source>
        <dbReference type="HAMAP-Rule" id="MF_00235"/>
    </source>
</evidence>
<protein>
    <recommendedName>
        <fullName evidence="1">Adenylate kinase</fullName>
        <shortName evidence="1">AK</shortName>
        <ecNumber evidence="1">2.7.4.3</ecNumber>
    </recommendedName>
    <alternativeName>
        <fullName evidence="1">ATP-AMP transphosphorylase</fullName>
    </alternativeName>
    <alternativeName>
        <fullName evidence="1">ATP:AMP phosphotransferase</fullName>
    </alternativeName>
    <alternativeName>
        <fullName evidence="1">Adenylate monophosphate kinase</fullName>
    </alternativeName>
</protein>
<dbReference type="EC" id="2.7.4.3" evidence="1"/>
<dbReference type="EMBL" id="CP001013">
    <property type="protein sequence ID" value="ACB34823.1"/>
    <property type="molecule type" value="Genomic_DNA"/>
</dbReference>
<dbReference type="RefSeq" id="WP_012347579.1">
    <property type="nucleotide sequence ID" value="NC_010524.1"/>
</dbReference>
<dbReference type="SMR" id="B1Y6I7"/>
<dbReference type="STRING" id="395495.Lcho_2558"/>
<dbReference type="KEGG" id="lch:Lcho_2558"/>
<dbReference type="eggNOG" id="COG0563">
    <property type="taxonomic scope" value="Bacteria"/>
</dbReference>
<dbReference type="HOGENOM" id="CLU_032354_1_2_4"/>
<dbReference type="OrthoDB" id="9805030at2"/>
<dbReference type="UniPathway" id="UPA00588">
    <property type="reaction ID" value="UER00649"/>
</dbReference>
<dbReference type="Proteomes" id="UP000001693">
    <property type="component" value="Chromosome"/>
</dbReference>
<dbReference type="GO" id="GO:0005737">
    <property type="term" value="C:cytoplasm"/>
    <property type="evidence" value="ECO:0007669"/>
    <property type="project" value="UniProtKB-SubCell"/>
</dbReference>
<dbReference type="GO" id="GO:0004017">
    <property type="term" value="F:adenylate kinase activity"/>
    <property type="evidence" value="ECO:0007669"/>
    <property type="project" value="UniProtKB-UniRule"/>
</dbReference>
<dbReference type="GO" id="GO:0005524">
    <property type="term" value="F:ATP binding"/>
    <property type="evidence" value="ECO:0007669"/>
    <property type="project" value="UniProtKB-UniRule"/>
</dbReference>
<dbReference type="GO" id="GO:0044209">
    <property type="term" value="P:AMP salvage"/>
    <property type="evidence" value="ECO:0007669"/>
    <property type="project" value="UniProtKB-UniRule"/>
</dbReference>
<dbReference type="CDD" id="cd01428">
    <property type="entry name" value="ADK"/>
    <property type="match status" value="1"/>
</dbReference>
<dbReference type="FunFam" id="3.40.50.300:FF:000106">
    <property type="entry name" value="Adenylate kinase mitochondrial"/>
    <property type="match status" value="1"/>
</dbReference>
<dbReference type="Gene3D" id="3.40.50.300">
    <property type="entry name" value="P-loop containing nucleotide triphosphate hydrolases"/>
    <property type="match status" value="1"/>
</dbReference>
<dbReference type="HAMAP" id="MF_00235">
    <property type="entry name" value="Adenylate_kinase_Adk"/>
    <property type="match status" value="1"/>
</dbReference>
<dbReference type="InterPro" id="IPR006259">
    <property type="entry name" value="Adenyl_kin_sub"/>
</dbReference>
<dbReference type="InterPro" id="IPR000850">
    <property type="entry name" value="Adenylat/UMP-CMP_kin"/>
</dbReference>
<dbReference type="InterPro" id="IPR033690">
    <property type="entry name" value="Adenylat_kinase_CS"/>
</dbReference>
<dbReference type="InterPro" id="IPR007862">
    <property type="entry name" value="Adenylate_kinase_lid-dom"/>
</dbReference>
<dbReference type="InterPro" id="IPR027417">
    <property type="entry name" value="P-loop_NTPase"/>
</dbReference>
<dbReference type="NCBIfam" id="TIGR01351">
    <property type="entry name" value="adk"/>
    <property type="match status" value="1"/>
</dbReference>
<dbReference type="NCBIfam" id="NF001379">
    <property type="entry name" value="PRK00279.1-1"/>
    <property type="match status" value="1"/>
</dbReference>
<dbReference type="NCBIfam" id="NF001380">
    <property type="entry name" value="PRK00279.1-2"/>
    <property type="match status" value="1"/>
</dbReference>
<dbReference type="NCBIfam" id="NF001381">
    <property type="entry name" value="PRK00279.1-3"/>
    <property type="match status" value="1"/>
</dbReference>
<dbReference type="NCBIfam" id="NF011100">
    <property type="entry name" value="PRK14527.1"/>
    <property type="match status" value="1"/>
</dbReference>
<dbReference type="PANTHER" id="PTHR23359">
    <property type="entry name" value="NUCLEOTIDE KINASE"/>
    <property type="match status" value="1"/>
</dbReference>
<dbReference type="Pfam" id="PF00406">
    <property type="entry name" value="ADK"/>
    <property type="match status" value="1"/>
</dbReference>
<dbReference type="Pfam" id="PF05191">
    <property type="entry name" value="ADK_lid"/>
    <property type="match status" value="1"/>
</dbReference>
<dbReference type="PRINTS" id="PR00094">
    <property type="entry name" value="ADENYLTKNASE"/>
</dbReference>
<dbReference type="SUPFAM" id="SSF52540">
    <property type="entry name" value="P-loop containing nucleoside triphosphate hydrolases"/>
    <property type="match status" value="1"/>
</dbReference>
<dbReference type="PROSITE" id="PS00113">
    <property type="entry name" value="ADENYLATE_KINASE"/>
    <property type="match status" value="1"/>
</dbReference>